<organism>
    <name type="scientific">Arabidopsis thaliana</name>
    <name type="common">Mouse-ear cress</name>
    <dbReference type="NCBI Taxonomy" id="3702"/>
    <lineage>
        <taxon>Eukaryota</taxon>
        <taxon>Viridiplantae</taxon>
        <taxon>Streptophyta</taxon>
        <taxon>Embryophyta</taxon>
        <taxon>Tracheophyta</taxon>
        <taxon>Spermatophyta</taxon>
        <taxon>Magnoliopsida</taxon>
        <taxon>eudicotyledons</taxon>
        <taxon>Gunneridae</taxon>
        <taxon>Pentapetalae</taxon>
        <taxon>rosids</taxon>
        <taxon>malvids</taxon>
        <taxon>Brassicales</taxon>
        <taxon>Brassicaceae</taxon>
        <taxon>Camelineae</taxon>
        <taxon>Arabidopsis</taxon>
    </lineage>
</organism>
<dbReference type="EC" id="2.7.11.-"/>
<dbReference type="EMBL" id="AF224707">
    <property type="protein sequence ID" value="AAK28317.1"/>
    <property type="molecule type" value="mRNA"/>
</dbReference>
<dbReference type="EMBL" id="AL022347">
    <property type="protein sequence ID" value="CAA18460.1"/>
    <property type="status" value="ALT_SEQ"/>
    <property type="molecule type" value="Genomic_DNA"/>
</dbReference>
<dbReference type="EMBL" id="AL031018">
    <property type="protein sequence ID" value="CAA19829.1"/>
    <property type="status" value="ALT_SEQ"/>
    <property type="molecule type" value="Genomic_DNA"/>
</dbReference>
<dbReference type="EMBL" id="AL161558">
    <property type="protein sequence ID" value="CAB79268.1"/>
    <property type="status" value="ALT_SEQ"/>
    <property type="molecule type" value="Genomic_DNA"/>
</dbReference>
<dbReference type="EMBL" id="CP002687">
    <property type="protein sequence ID" value="AEE84712.1"/>
    <property type="molecule type" value="Genomic_DNA"/>
</dbReference>
<dbReference type="EMBL" id="CP002687">
    <property type="protein sequence ID" value="AEE84713.1"/>
    <property type="molecule type" value="Genomic_DNA"/>
</dbReference>
<dbReference type="EMBL" id="AY142496">
    <property type="protein sequence ID" value="AAN13047.1"/>
    <property type="molecule type" value="mRNA"/>
</dbReference>
<dbReference type="PIR" id="T04830">
    <property type="entry name" value="T04830"/>
</dbReference>
<dbReference type="RefSeq" id="NP_567677.1">
    <molecule id="Q9C5S8-1"/>
    <property type="nucleotide sequence ID" value="NM_118442.4"/>
</dbReference>
<dbReference type="RefSeq" id="NP_849425.1">
    <molecule id="Q9C5S8-2"/>
    <property type="nucleotide sequence ID" value="NM_179094.3"/>
</dbReference>
<dbReference type="SMR" id="Q9C5S8"/>
<dbReference type="BioGRID" id="13701">
    <property type="interactions" value="1"/>
</dbReference>
<dbReference type="FunCoup" id="Q9C5S8">
    <property type="interactions" value="191"/>
</dbReference>
<dbReference type="STRING" id="3702.Q9C5S8"/>
<dbReference type="GlyCosmos" id="Q9C5S8">
    <property type="glycosylation" value="2 sites, No reported glycans"/>
</dbReference>
<dbReference type="GlyGen" id="Q9C5S8">
    <property type="glycosylation" value="2 sites"/>
</dbReference>
<dbReference type="PaxDb" id="3702-AT4G23130.2"/>
<dbReference type="ProteomicsDB" id="222766">
    <molecule id="Q9C5S8-1"/>
</dbReference>
<dbReference type="EnsemblPlants" id="AT4G23130.1">
    <molecule id="Q9C5S8-1"/>
    <property type="protein sequence ID" value="AT4G23130.1"/>
    <property type="gene ID" value="AT4G23130"/>
</dbReference>
<dbReference type="EnsemblPlants" id="AT4G23130.2">
    <molecule id="Q9C5S8-2"/>
    <property type="protein sequence ID" value="AT4G23130.2"/>
    <property type="gene ID" value="AT4G23130"/>
</dbReference>
<dbReference type="GeneID" id="828412"/>
<dbReference type="Gramene" id="AT4G23130.1">
    <molecule id="Q9C5S8-1"/>
    <property type="protein sequence ID" value="AT4G23130.1"/>
    <property type="gene ID" value="AT4G23130"/>
</dbReference>
<dbReference type="Gramene" id="AT4G23130.2">
    <molecule id="Q9C5S8-2"/>
    <property type="protein sequence ID" value="AT4G23130.2"/>
    <property type="gene ID" value="AT4G23130"/>
</dbReference>
<dbReference type="KEGG" id="ath:AT4G23130"/>
<dbReference type="Araport" id="AT4G23130"/>
<dbReference type="TAIR" id="AT4G23130">
    <property type="gene designation" value="CRK5"/>
</dbReference>
<dbReference type="eggNOG" id="ENOG502QWDY">
    <property type="taxonomic scope" value="Eukaryota"/>
</dbReference>
<dbReference type="HOGENOM" id="CLU_000288_35_2_1"/>
<dbReference type="InParanoid" id="Q9C5S8"/>
<dbReference type="OMA" id="PEACRDC"/>
<dbReference type="OrthoDB" id="688481at2759"/>
<dbReference type="PhylomeDB" id="Q9C5S8"/>
<dbReference type="PRO" id="PR:Q9C5S8"/>
<dbReference type="Proteomes" id="UP000006548">
    <property type="component" value="Chromosome 4"/>
</dbReference>
<dbReference type="ExpressionAtlas" id="Q9C5S8">
    <property type="expression patterns" value="baseline and differential"/>
</dbReference>
<dbReference type="GO" id="GO:0016020">
    <property type="term" value="C:membrane"/>
    <property type="evidence" value="ECO:0007669"/>
    <property type="project" value="UniProtKB-SubCell"/>
</dbReference>
<dbReference type="GO" id="GO:0005524">
    <property type="term" value="F:ATP binding"/>
    <property type="evidence" value="ECO:0007669"/>
    <property type="project" value="UniProtKB-KW"/>
</dbReference>
<dbReference type="GO" id="GO:0106310">
    <property type="term" value="F:protein serine kinase activity"/>
    <property type="evidence" value="ECO:0007669"/>
    <property type="project" value="RHEA"/>
</dbReference>
<dbReference type="GO" id="GO:0004674">
    <property type="term" value="F:protein serine/threonine kinase activity"/>
    <property type="evidence" value="ECO:0007669"/>
    <property type="project" value="UniProtKB-KW"/>
</dbReference>
<dbReference type="GO" id="GO:0042742">
    <property type="term" value="P:defense response to bacterium"/>
    <property type="evidence" value="ECO:0000270"/>
    <property type="project" value="TAIR"/>
</dbReference>
<dbReference type="GO" id="GO:0012501">
    <property type="term" value="P:programmed cell death"/>
    <property type="evidence" value="ECO:0000315"/>
    <property type="project" value="TAIR"/>
</dbReference>
<dbReference type="GO" id="GO:0009751">
    <property type="term" value="P:response to salicylic acid"/>
    <property type="evidence" value="ECO:0000270"/>
    <property type="project" value="TAIR"/>
</dbReference>
<dbReference type="CDD" id="cd23509">
    <property type="entry name" value="Gnk2-like"/>
    <property type="match status" value="2"/>
</dbReference>
<dbReference type="CDD" id="cd14066">
    <property type="entry name" value="STKc_IRAK"/>
    <property type="match status" value="1"/>
</dbReference>
<dbReference type="FunFam" id="3.30.200.20:FF:000142">
    <property type="entry name" value="Cysteine-rich receptor-like protein kinase 10"/>
    <property type="match status" value="1"/>
</dbReference>
<dbReference type="FunFam" id="3.30.430.20:FF:000002">
    <property type="entry name" value="Cysteine-rich receptor-like protein kinase 10"/>
    <property type="match status" value="1"/>
</dbReference>
<dbReference type="FunFam" id="1.10.510.10:FF:000129">
    <property type="entry name" value="cysteine-rich receptor-like protein kinase 10"/>
    <property type="match status" value="1"/>
</dbReference>
<dbReference type="FunFam" id="3.30.430.20:FF:000026">
    <property type="entry name" value="Cysteine-rich receptor-like protein kinase 5"/>
    <property type="match status" value="1"/>
</dbReference>
<dbReference type="Gene3D" id="3.30.430.20">
    <property type="entry name" value="Gnk2 domain, C-X8-C-X2-C motif"/>
    <property type="match status" value="2"/>
</dbReference>
<dbReference type="Gene3D" id="3.30.200.20">
    <property type="entry name" value="Phosphorylase Kinase, domain 1"/>
    <property type="match status" value="1"/>
</dbReference>
<dbReference type="Gene3D" id="1.10.510.10">
    <property type="entry name" value="Transferase(Phosphotransferase) domain 1"/>
    <property type="match status" value="1"/>
</dbReference>
<dbReference type="InterPro" id="IPR002902">
    <property type="entry name" value="GNK2"/>
</dbReference>
<dbReference type="InterPro" id="IPR038408">
    <property type="entry name" value="GNK2_sf"/>
</dbReference>
<dbReference type="InterPro" id="IPR011009">
    <property type="entry name" value="Kinase-like_dom_sf"/>
</dbReference>
<dbReference type="InterPro" id="IPR000719">
    <property type="entry name" value="Prot_kinase_dom"/>
</dbReference>
<dbReference type="InterPro" id="IPR017441">
    <property type="entry name" value="Protein_kinase_ATP_BS"/>
</dbReference>
<dbReference type="InterPro" id="IPR001245">
    <property type="entry name" value="Ser-Thr/Tyr_kinase_cat_dom"/>
</dbReference>
<dbReference type="InterPro" id="IPR008271">
    <property type="entry name" value="Ser/Thr_kinase_AS"/>
</dbReference>
<dbReference type="PANTHER" id="PTHR27002:SF1050">
    <property type="entry name" value="CYSTEINE-RICH RECEPTOR-LIKE PROTEIN KINASE 5"/>
    <property type="match status" value="1"/>
</dbReference>
<dbReference type="PANTHER" id="PTHR27002">
    <property type="entry name" value="RECEPTOR-LIKE SERINE/THREONINE-PROTEIN KINASE SD1-8"/>
    <property type="match status" value="1"/>
</dbReference>
<dbReference type="Pfam" id="PF07714">
    <property type="entry name" value="PK_Tyr_Ser-Thr"/>
    <property type="match status" value="1"/>
</dbReference>
<dbReference type="Pfam" id="PF01657">
    <property type="entry name" value="Stress-antifung"/>
    <property type="match status" value="2"/>
</dbReference>
<dbReference type="SMART" id="SM00220">
    <property type="entry name" value="S_TKc"/>
    <property type="match status" value="1"/>
</dbReference>
<dbReference type="SUPFAM" id="SSF56112">
    <property type="entry name" value="Protein kinase-like (PK-like)"/>
    <property type="match status" value="1"/>
</dbReference>
<dbReference type="PROSITE" id="PS51473">
    <property type="entry name" value="GNK2"/>
    <property type="match status" value="2"/>
</dbReference>
<dbReference type="PROSITE" id="PS00107">
    <property type="entry name" value="PROTEIN_KINASE_ATP"/>
    <property type="match status" value="1"/>
</dbReference>
<dbReference type="PROSITE" id="PS50011">
    <property type="entry name" value="PROTEIN_KINASE_DOM"/>
    <property type="match status" value="1"/>
</dbReference>
<dbReference type="PROSITE" id="PS00108">
    <property type="entry name" value="PROTEIN_KINASE_ST"/>
    <property type="match status" value="1"/>
</dbReference>
<name>CRK5_ARATH</name>
<sequence>MSAYTSLNFLFLLTFFIGSLRVSAQLQDPTYVGHVCTNRISRNSIYFSNLQTLLTSLSSNNAYFSLGSHSLTKGQNSDMVFGLYLCKGDLSPESCRECVIFAAKDTRSRCPGGKEFLIQYDECMLGYSDRNIFMDTVTTTTIITWNTQKVTADQSDRFNDAVLSLMKKSAEEAANSTSKKFAVKKSDFSSSQSLYASVQCIPDLTSEDCVMCLQQSIKELYFNKVGGRFLVPSCNSRYEVYPFYKETIEGTVLPPPVSAPPLPLVSTPSFPPGKGKNSTVIIIAIVVPVAISVLICVAVFSFHASKRAKKTYDTPEEDDITTAGSLQFDFKVIEAATDKFSMCNKLGQGGFGQVYKGTLPNGVQVAVKRLSKTSGQGEKEFKNEVVVVAKLQHRNLVKLLGFCLEREEKILVYEFVSNKSLDYFLFDSRMQSQLDWTTRYKIIGGIARGILYLHQDSRLTIIHRDLKAGNILLDADMNPKVADFGMARIFEIDQTEAHTRRVVGTYGYMSPEYAMYGQFSMKSDVYSFGVLVLEIISGRKNSSLYQMDASFGNLVTYTWRLWSDGSPLDLVDSSFRDSYQRNEIIRCIHIALLCVQEDTENRPTMSAIVQMLTTSSIALAVPQPPGFFFRSNHEQAGPSMDKSSLCSIDAASITILAPR</sequence>
<reference key="1">
    <citation type="journal article" date="2000" name="Plant J.">
        <title>Identification of genes encoding receptor-like protein kinases as possible targets of pathogen- and salicylic acid-induced WRKY DNA-binding proteins in Arabidopsis.</title>
        <authorList>
            <person name="Du L."/>
            <person name="Chen Z."/>
        </authorList>
    </citation>
    <scope>NUCLEOTIDE SEQUENCE [MRNA] (ISOFORM 1)</scope>
    <scope>INDUCTION</scope>
</reference>
<reference key="2">
    <citation type="journal article" date="1999" name="Nature">
        <title>Sequence and analysis of chromosome 4 of the plant Arabidopsis thaliana.</title>
        <authorList>
            <person name="Mayer K.F.X."/>
            <person name="Schueller C."/>
            <person name="Wambutt R."/>
            <person name="Murphy G."/>
            <person name="Volckaert G."/>
            <person name="Pohl T."/>
            <person name="Duesterhoeft A."/>
            <person name="Stiekema W."/>
            <person name="Entian K.-D."/>
            <person name="Terryn N."/>
            <person name="Harris B."/>
            <person name="Ansorge W."/>
            <person name="Brandt P."/>
            <person name="Grivell L.A."/>
            <person name="Rieger M."/>
            <person name="Weichselgartner M."/>
            <person name="de Simone V."/>
            <person name="Obermaier B."/>
            <person name="Mache R."/>
            <person name="Mueller M."/>
            <person name="Kreis M."/>
            <person name="Delseny M."/>
            <person name="Puigdomenech P."/>
            <person name="Watson M."/>
            <person name="Schmidtheini T."/>
            <person name="Reichert B."/>
            <person name="Portetelle D."/>
            <person name="Perez-Alonso M."/>
            <person name="Boutry M."/>
            <person name="Bancroft I."/>
            <person name="Vos P."/>
            <person name="Hoheisel J."/>
            <person name="Zimmermann W."/>
            <person name="Wedler H."/>
            <person name="Ridley P."/>
            <person name="Langham S.-A."/>
            <person name="McCullagh B."/>
            <person name="Bilham L."/>
            <person name="Robben J."/>
            <person name="van der Schueren J."/>
            <person name="Grymonprez B."/>
            <person name="Chuang Y.-J."/>
            <person name="Vandenbussche F."/>
            <person name="Braeken M."/>
            <person name="Weltjens I."/>
            <person name="Voet M."/>
            <person name="Bastiaens I."/>
            <person name="Aert R."/>
            <person name="Defoor E."/>
            <person name="Weitzenegger T."/>
            <person name="Bothe G."/>
            <person name="Ramsperger U."/>
            <person name="Hilbert H."/>
            <person name="Braun M."/>
            <person name="Holzer E."/>
            <person name="Brandt A."/>
            <person name="Peters S."/>
            <person name="van Staveren M."/>
            <person name="Dirkse W."/>
            <person name="Mooijman P."/>
            <person name="Klein Lankhorst R."/>
            <person name="Rose M."/>
            <person name="Hauf J."/>
            <person name="Koetter P."/>
            <person name="Berneiser S."/>
            <person name="Hempel S."/>
            <person name="Feldpausch M."/>
            <person name="Lamberth S."/>
            <person name="Van den Daele H."/>
            <person name="De Keyser A."/>
            <person name="Buysshaert C."/>
            <person name="Gielen J."/>
            <person name="Villarroel R."/>
            <person name="De Clercq R."/>
            <person name="van Montagu M."/>
            <person name="Rogers J."/>
            <person name="Cronin A."/>
            <person name="Quail M.A."/>
            <person name="Bray-Allen S."/>
            <person name="Clark L."/>
            <person name="Doggett J."/>
            <person name="Hall S."/>
            <person name="Kay M."/>
            <person name="Lennard N."/>
            <person name="McLay K."/>
            <person name="Mayes R."/>
            <person name="Pettett A."/>
            <person name="Rajandream M.A."/>
            <person name="Lyne M."/>
            <person name="Benes V."/>
            <person name="Rechmann S."/>
            <person name="Borkova D."/>
            <person name="Bloecker H."/>
            <person name="Scharfe M."/>
            <person name="Grimm M."/>
            <person name="Loehnert T.-H."/>
            <person name="Dose S."/>
            <person name="de Haan M."/>
            <person name="Maarse A.C."/>
            <person name="Schaefer M."/>
            <person name="Mueller-Auer S."/>
            <person name="Gabel C."/>
            <person name="Fuchs M."/>
            <person name="Fartmann B."/>
            <person name="Granderath K."/>
            <person name="Dauner D."/>
            <person name="Herzl A."/>
            <person name="Neumann S."/>
            <person name="Argiriou A."/>
            <person name="Vitale D."/>
            <person name="Liguori R."/>
            <person name="Piravandi E."/>
            <person name="Massenet O."/>
            <person name="Quigley F."/>
            <person name="Clabauld G."/>
            <person name="Muendlein A."/>
            <person name="Felber R."/>
            <person name="Schnabl S."/>
            <person name="Hiller R."/>
            <person name="Schmidt W."/>
            <person name="Lecharny A."/>
            <person name="Aubourg S."/>
            <person name="Chefdor F."/>
            <person name="Cooke R."/>
            <person name="Berger C."/>
            <person name="Monfort A."/>
            <person name="Casacuberta E."/>
            <person name="Gibbons T."/>
            <person name="Weber N."/>
            <person name="Vandenbol M."/>
            <person name="Bargues M."/>
            <person name="Terol J."/>
            <person name="Torres A."/>
            <person name="Perez-Perez A."/>
            <person name="Purnelle B."/>
            <person name="Bent E."/>
            <person name="Johnson S."/>
            <person name="Tacon D."/>
            <person name="Jesse T."/>
            <person name="Heijnen L."/>
            <person name="Schwarz S."/>
            <person name="Scholler P."/>
            <person name="Heber S."/>
            <person name="Francs P."/>
            <person name="Bielke C."/>
            <person name="Frishman D."/>
            <person name="Haase D."/>
            <person name="Lemcke K."/>
            <person name="Mewes H.-W."/>
            <person name="Stocker S."/>
            <person name="Zaccaria P."/>
            <person name="Bevan M."/>
            <person name="Wilson R.K."/>
            <person name="de la Bastide M."/>
            <person name="Habermann K."/>
            <person name="Parnell L."/>
            <person name="Dedhia N."/>
            <person name="Gnoj L."/>
            <person name="Schutz K."/>
            <person name="Huang E."/>
            <person name="Spiegel L."/>
            <person name="Sekhon M."/>
            <person name="Murray J."/>
            <person name="Sheet P."/>
            <person name="Cordes M."/>
            <person name="Abu-Threideh J."/>
            <person name="Stoneking T."/>
            <person name="Kalicki J."/>
            <person name="Graves T."/>
            <person name="Harmon G."/>
            <person name="Edwards J."/>
            <person name="Latreille P."/>
            <person name="Courtney L."/>
            <person name="Cloud J."/>
            <person name="Abbott A."/>
            <person name="Scott K."/>
            <person name="Johnson D."/>
            <person name="Minx P."/>
            <person name="Bentley D."/>
            <person name="Fulton B."/>
            <person name="Miller N."/>
            <person name="Greco T."/>
            <person name="Kemp K."/>
            <person name="Kramer J."/>
            <person name="Fulton L."/>
            <person name="Mardis E."/>
            <person name="Dante M."/>
            <person name="Pepin K."/>
            <person name="Hillier L.W."/>
            <person name="Nelson J."/>
            <person name="Spieth J."/>
            <person name="Ryan E."/>
            <person name="Andrews S."/>
            <person name="Geisel C."/>
            <person name="Layman D."/>
            <person name="Du H."/>
            <person name="Ali J."/>
            <person name="Berghoff A."/>
            <person name="Jones K."/>
            <person name="Drone K."/>
            <person name="Cotton M."/>
            <person name="Joshu C."/>
            <person name="Antonoiu B."/>
            <person name="Zidanic M."/>
            <person name="Strong C."/>
            <person name="Sun H."/>
            <person name="Lamar B."/>
            <person name="Yordan C."/>
            <person name="Ma P."/>
            <person name="Zhong J."/>
            <person name="Preston R."/>
            <person name="Vil D."/>
            <person name="Shekher M."/>
            <person name="Matero A."/>
            <person name="Shah R."/>
            <person name="Swaby I.K."/>
            <person name="O'Shaughnessy A."/>
            <person name="Rodriguez M."/>
            <person name="Hoffman J."/>
            <person name="Till S."/>
            <person name="Granat S."/>
            <person name="Shohdy N."/>
            <person name="Hasegawa A."/>
            <person name="Hameed A."/>
            <person name="Lodhi M."/>
            <person name="Johnson A."/>
            <person name="Chen E."/>
            <person name="Marra M.A."/>
            <person name="Martienssen R."/>
            <person name="McCombie W.R."/>
        </authorList>
    </citation>
    <scope>NUCLEOTIDE SEQUENCE [LARGE SCALE GENOMIC DNA]</scope>
    <source>
        <strain>cv. Columbia</strain>
    </source>
</reference>
<reference key="3">
    <citation type="journal article" date="2017" name="Plant J.">
        <title>Araport11: a complete reannotation of the Arabidopsis thaliana reference genome.</title>
        <authorList>
            <person name="Cheng C.Y."/>
            <person name="Krishnakumar V."/>
            <person name="Chan A.P."/>
            <person name="Thibaud-Nissen F."/>
            <person name="Schobel S."/>
            <person name="Town C.D."/>
        </authorList>
    </citation>
    <scope>GENOME REANNOTATION</scope>
    <source>
        <strain>cv. Columbia</strain>
    </source>
</reference>
<reference key="4">
    <citation type="journal article" date="2003" name="Science">
        <title>Empirical analysis of transcriptional activity in the Arabidopsis genome.</title>
        <authorList>
            <person name="Yamada K."/>
            <person name="Lim J."/>
            <person name="Dale J.M."/>
            <person name="Chen H."/>
            <person name="Shinn P."/>
            <person name="Palm C.J."/>
            <person name="Southwick A.M."/>
            <person name="Wu H.C."/>
            <person name="Kim C.J."/>
            <person name="Nguyen M."/>
            <person name="Pham P.K."/>
            <person name="Cheuk R.F."/>
            <person name="Karlin-Newmann G."/>
            <person name="Liu S.X."/>
            <person name="Lam B."/>
            <person name="Sakano H."/>
            <person name="Wu T."/>
            <person name="Yu G."/>
            <person name="Miranda M."/>
            <person name="Quach H.L."/>
            <person name="Tripp M."/>
            <person name="Chang C.H."/>
            <person name="Lee J.M."/>
            <person name="Toriumi M.J."/>
            <person name="Chan M.M."/>
            <person name="Tang C.C."/>
            <person name="Onodera C.S."/>
            <person name="Deng J.M."/>
            <person name="Akiyama K."/>
            <person name="Ansari Y."/>
            <person name="Arakawa T."/>
            <person name="Banh J."/>
            <person name="Banno F."/>
            <person name="Bowser L."/>
            <person name="Brooks S.Y."/>
            <person name="Carninci P."/>
            <person name="Chao Q."/>
            <person name="Choy N."/>
            <person name="Enju A."/>
            <person name="Goldsmith A.D."/>
            <person name="Gurjal M."/>
            <person name="Hansen N.F."/>
            <person name="Hayashizaki Y."/>
            <person name="Johnson-Hopson C."/>
            <person name="Hsuan V.W."/>
            <person name="Iida K."/>
            <person name="Karnes M."/>
            <person name="Khan S."/>
            <person name="Koesema E."/>
            <person name="Ishida J."/>
            <person name="Jiang P.X."/>
            <person name="Jones T."/>
            <person name="Kawai J."/>
            <person name="Kamiya A."/>
            <person name="Meyers C."/>
            <person name="Nakajima M."/>
            <person name="Narusaka M."/>
            <person name="Seki M."/>
            <person name="Sakurai T."/>
            <person name="Satou M."/>
            <person name="Tamse R."/>
            <person name="Vaysberg M."/>
            <person name="Wallender E.K."/>
            <person name="Wong C."/>
            <person name="Yamamura Y."/>
            <person name="Yuan S."/>
            <person name="Shinozaki K."/>
            <person name="Davis R.W."/>
            <person name="Theologis A."/>
            <person name="Ecker J.R."/>
        </authorList>
    </citation>
    <scope>NUCLEOTIDE SEQUENCE [LARGE SCALE MRNA] (ISOFORM 2)</scope>
    <source>
        <strain>cv. Columbia</strain>
    </source>
</reference>
<reference key="5">
    <citation type="journal article" date="2000" name="Plant Cell Physiol.">
        <title>Salicylic acid induces the expression of a number of receptor-like kinase genes in Arabidopsis thaliana.</title>
        <authorList>
            <person name="Ohtake Y."/>
            <person name="Takahashi T."/>
            <person name="Komeda Y."/>
        </authorList>
    </citation>
    <scope>INDUCTION</scope>
</reference>
<reference key="6">
    <citation type="journal article" date="2001" name="Plant Physiol.">
        <title>A superfamily of proteins with novel cysteine-rich repeats.</title>
        <authorList>
            <person name="Chen Z."/>
        </authorList>
    </citation>
    <scope>GENE FAMILY ORGANIZATION</scope>
    <scope>NOMENCLATURE</scope>
</reference>
<reference key="7">
    <citation type="journal article" date="2003" name="Plant Mol. Biol.">
        <title>Sensitization of defense responses and activation of programmed cell death by a pathogen-induced receptor-like protein kinase in Arabidopsis.</title>
        <authorList>
            <person name="Chen K."/>
            <person name="Du L."/>
            <person name="Chen Z."/>
        </authorList>
    </citation>
    <scope>FUNCTION</scope>
</reference>
<reference key="8">
    <citation type="journal article" date="2004" name="Plant Mol. Biol.">
        <title>Activation of hypersensitive cell death by pathogen-induced receptor-like protein kinases from Arabidopsis.</title>
        <authorList>
            <person name="Chen K."/>
            <person name="Fan B."/>
            <person name="Du L."/>
            <person name="Chen Z."/>
        </authorList>
    </citation>
    <scope>FUNCTION</scope>
    <scope>INDUCTION</scope>
    <scope>INTERACTION WITH CRKIPS</scope>
    <scope>MUTAGENESIS OF LYS-368</scope>
</reference>
<comment type="function">
    <text evidence="8 9">Involved in multiple distinct defense responses. May function as a disease resistance (R) protein.</text>
</comment>
<comment type="catalytic activity">
    <reaction>
        <text>L-seryl-[protein] + ATP = O-phospho-L-seryl-[protein] + ADP + H(+)</text>
        <dbReference type="Rhea" id="RHEA:17989"/>
        <dbReference type="Rhea" id="RHEA-COMP:9863"/>
        <dbReference type="Rhea" id="RHEA-COMP:11604"/>
        <dbReference type="ChEBI" id="CHEBI:15378"/>
        <dbReference type="ChEBI" id="CHEBI:29999"/>
        <dbReference type="ChEBI" id="CHEBI:30616"/>
        <dbReference type="ChEBI" id="CHEBI:83421"/>
        <dbReference type="ChEBI" id="CHEBI:456216"/>
    </reaction>
</comment>
<comment type="catalytic activity">
    <reaction>
        <text>L-threonyl-[protein] + ATP = O-phospho-L-threonyl-[protein] + ADP + H(+)</text>
        <dbReference type="Rhea" id="RHEA:46608"/>
        <dbReference type="Rhea" id="RHEA-COMP:11060"/>
        <dbReference type="Rhea" id="RHEA-COMP:11605"/>
        <dbReference type="ChEBI" id="CHEBI:15378"/>
        <dbReference type="ChEBI" id="CHEBI:30013"/>
        <dbReference type="ChEBI" id="CHEBI:30616"/>
        <dbReference type="ChEBI" id="CHEBI:61977"/>
        <dbReference type="ChEBI" id="CHEBI:456216"/>
    </reaction>
</comment>
<comment type="subunit">
    <text evidence="9">Interacts with CRKIP1 (KAPP), CRKIP2 and CRKIP3, three kinase-associated type 2C proteins.</text>
</comment>
<comment type="subcellular location">
    <subcellularLocation>
        <location evidence="11">Membrane</location>
        <topology evidence="11">Single-pass membrane protein</topology>
    </subcellularLocation>
</comment>
<comment type="alternative products">
    <event type="alternative splicing"/>
    <isoform>
        <id>Q9C5S8-1</id>
        <name>1</name>
        <sequence type="displayed"/>
    </isoform>
    <isoform>
        <id>Q9C5S8-2</id>
        <name>2</name>
        <sequence type="described" ref="VSP_026686"/>
    </isoform>
</comment>
<comment type="induction">
    <text evidence="6 7 9">By salicylic acid (SA) or by a bacterial pathogen infection. May be regulated by WRKY DNA-binding proteins at the transcriptional level.</text>
</comment>
<comment type="miscellaneous">
    <molecule>Isoform 2</molecule>
    <text evidence="11">May be due to a competing donor splice site.</text>
</comment>
<comment type="similarity">
    <text evidence="3">Belongs to the protein kinase superfamily. Ser/Thr protein kinase family. CRK subfamily.</text>
</comment>
<comment type="sequence caution" evidence="11">
    <conflict type="erroneous gene model prediction">
        <sequence resource="EMBL-CDS" id="CAA18460"/>
    </conflict>
</comment>
<comment type="sequence caution" evidence="11">
    <conflict type="erroneous gene model prediction">
        <sequence resource="EMBL-CDS" id="CAA19829"/>
    </conflict>
</comment>
<comment type="sequence caution" evidence="11">
    <conflict type="erroneous gene model prediction">
        <sequence resource="EMBL-CDS" id="CAB79268"/>
    </conflict>
</comment>
<keyword id="KW-0025">Alternative splicing</keyword>
<keyword id="KW-0067">ATP-binding</keyword>
<keyword id="KW-0325">Glycoprotein</keyword>
<keyword id="KW-0418">Kinase</keyword>
<keyword id="KW-0472">Membrane</keyword>
<keyword id="KW-0547">Nucleotide-binding</keyword>
<keyword id="KW-0597">Phosphoprotein</keyword>
<keyword id="KW-0611">Plant defense</keyword>
<keyword id="KW-0675">Receptor</keyword>
<keyword id="KW-1185">Reference proteome</keyword>
<keyword id="KW-0677">Repeat</keyword>
<keyword id="KW-0723">Serine/threonine-protein kinase</keyword>
<keyword id="KW-0732">Signal</keyword>
<keyword id="KW-0808">Transferase</keyword>
<keyword id="KW-0812">Transmembrane</keyword>
<keyword id="KW-1133">Transmembrane helix</keyword>
<evidence type="ECO:0000250" key="1">
    <source>
        <dbReference type="UniProtKB" id="O48814"/>
    </source>
</evidence>
<evidence type="ECO:0000255" key="2"/>
<evidence type="ECO:0000255" key="3">
    <source>
        <dbReference type="PROSITE-ProRule" id="PRU00159"/>
    </source>
</evidence>
<evidence type="ECO:0000255" key="4">
    <source>
        <dbReference type="PROSITE-ProRule" id="PRU00806"/>
    </source>
</evidence>
<evidence type="ECO:0000255" key="5">
    <source>
        <dbReference type="PROSITE-ProRule" id="PRU10027"/>
    </source>
</evidence>
<evidence type="ECO:0000269" key="6">
    <source>
    </source>
</evidence>
<evidence type="ECO:0000269" key="7">
    <source>
    </source>
</evidence>
<evidence type="ECO:0000269" key="8">
    <source>
    </source>
</evidence>
<evidence type="ECO:0000269" key="9">
    <source>
    </source>
</evidence>
<evidence type="ECO:0000303" key="10">
    <source>
    </source>
</evidence>
<evidence type="ECO:0000305" key="11"/>
<protein>
    <recommendedName>
        <fullName>Cysteine-rich receptor-like protein kinase 5</fullName>
        <shortName>Cysteine-rich RLK5</shortName>
        <ecNumber>2.7.11.-</ecNumber>
    </recommendedName>
    <alternativeName>
        <fullName>Receptor-like protein kinase 6</fullName>
    </alternativeName>
</protein>
<accession>Q9C5S8</accession>
<accession>O65465</accession>
<accession>Q8H1S3</accession>
<gene>
    <name type="primary">CRK5</name>
    <name type="synonym">RLK6</name>
    <name type="ordered locus">At4g23130</name>
    <name type="ORF">F21P8.20</name>
    <name type="ORF">F7H19.320</name>
</gene>
<proteinExistence type="evidence at protein level"/>
<feature type="signal peptide" evidence="2">
    <location>
        <begin position="1"/>
        <end position="24"/>
    </location>
</feature>
<feature type="chain" id="PRO_0000295052" description="Cysteine-rich receptor-like protein kinase 5">
    <location>
        <begin position="25"/>
        <end position="659"/>
    </location>
</feature>
<feature type="topological domain" description="Extracellular" evidence="2">
    <location>
        <begin position="25"/>
        <end position="279"/>
    </location>
</feature>
<feature type="transmembrane region" description="Helical" evidence="2">
    <location>
        <begin position="280"/>
        <end position="300"/>
    </location>
</feature>
<feature type="topological domain" description="Cytoplasmic" evidence="2">
    <location>
        <begin position="301"/>
        <end position="659"/>
    </location>
</feature>
<feature type="domain" description="Gnk2-homologous 1" evidence="4">
    <location>
        <begin position="28"/>
        <end position="132"/>
    </location>
</feature>
<feature type="domain" description="Gnk2-homologous 2" evidence="4">
    <location>
        <begin position="138"/>
        <end position="243"/>
    </location>
</feature>
<feature type="domain" description="Protein kinase" evidence="3">
    <location>
        <begin position="340"/>
        <end position="619"/>
    </location>
</feature>
<feature type="active site" description="Proton acceptor" evidence="3 5">
    <location>
        <position position="465"/>
    </location>
</feature>
<feature type="binding site" evidence="3">
    <location>
        <begin position="346"/>
        <end position="354"/>
    </location>
    <ligand>
        <name>ATP</name>
        <dbReference type="ChEBI" id="CHEBI:30616"/>
    </ligand>
</feature>
<feature type="binding site" evidence="3">
    <location>
        <position position="368"/>
    </location>
    <ligand>
        <name>ATP</name>
        <dbReference type="ChEBI" id="CHEBI:30616"/>
    </ligand>
</feature>
<feature type="modified residue" description="Phosphotyrosine" evidence="1">
    <location>
        <position position="413"/>
    </location>
</feature>
<feature type="modified residue" description="Phosphothreonine" evidence="1">
    <location>
        <position position="505"/>
    </location>
</feature>
<feature type="modified residue" description="Phosphotyrosine" evidence="1">
    <location>
        <position position="513"/>
    </location>
</feature>
<feature type="glycosylation site" description="N-linked (GlcNAc...) asparagine" evidence="2">
    <location>
        <position position="175"/>
    </location>
</feature>
<feature type="glycosylation site" description="N-linked (GlcNAc...) asparagine" evidence="2">
    <location>
        <position position="277"/>
    </location>
</feature>
<feature type="splice variant" id="VSP_026686" description="In isoform 2." evidence="10">
    <original>P</original>
    <variation>PGAND</variation>
    <location>
        <position position="315"/>
    </location>
</feature>
<feature type="mutagenesis site" description="Abolishes the interaction with CRKIPs." evidence="9">
    <original>K</original>
    <variation>E</variation>
    <location>
        <position position="368"/>
    </location>
</feature>